<organism>
    <name type="scientific">Allochromatium vinosum (strain ATCC 17899 / DSM 180 / NBRC 103801 / NCIMB 10441 / D)</name>
    <name type="common">Chromatium vinosum</name>
    <dbReference type="NCBI Taxonomy" id="572477"/>
    <lineage>
        <taxon>Bacteria</taxon>
        <taxon>Pseudomonadati</taxon>
        <taxon>Pseudomonadota</taxon>
        <taxon>Gammaproteobacteria</taxon>
        <taxon>Chromatiales</taxon>
        <taxon>Chromatiaceae</taxon>
        <taxon>Allochromatium</taxon>
    </lineage>
</organism>
<name>CY551_ALLVD</name>
<evidence type="ECO:0000269" key="1">
    <source>
    </source>
</evidence>
<accession>P80549</accession>
<accession>D3RTW7</accession>
<feature type="signal peptide" evidence="1">
    <location>
        <begin position="1"/>
        <end position="14"/>
    </location>
</feature>
<feature type="chain" id="PRO_0000108391" description="Cytochrome c-551">
    <location>
        <begin position="15"/>
        <end position="94"/>
    </location>
</feature>
<feature type="binding site" description="covalent">
    <location>
        <position position="24"/>
    </location>
    <ligand>
        <name>heme c</name>
        <dbReference type="ChEBI" id="CHEBI:61717"/>
    </ligand>
</feature>
<feature type="binding site" description="covalent">
    <location>
        <position position="27"/>
    </location>
    <ligand>
        <name>heme c</name>
        <dbReference type="ChEBI" id="CHEBI:61717"/>
    </ligand>
</feature>
<feature type="binding site" description="axial binding residue">
    <location>
        <position position="28"/>
    </location>
    <ligand>
        <name>heme c</name>
        <dbReference type="ChEBI" id="CHEBI:61717"/>
    </ligand>
    <ligandPart>
        <name>Fe</name>
        <dbReference type="ChEBI" id="CHEBI:18248"/>
    </ligandPart>
</feature>
<feature type="binding site" description="axial binding residue">
    <location>
        <position position="73"/>
    </location>
    <ligand>
        <name>heme c</name>
        <dbReference type="ChEBI" id="CHEBI:61717"/>
    </ligand>
    <ligandPart>
        <name>Fe</name>
        <dbReference type="ChEBI" id="CHEBI:18248"/>
    </ligandPart>
</feature>
<gene>
    <name type="ordered locus">Alvin_1694</name>
</gene>
<proteinExistence type="evidence at protein level"/>
<reference key="1">
    <citation type="journal article" date="2011" name="Stand. Genomic Sci.">
        <title>Complete genome sequence of Allochromatium vinosum DSM 180(T).</title>
        <authorList>
            <person name="Weissgerber T."/>
            <person name="Zigann R."/>
            <person name="Bruce D."/>
            <person name="Chang Y.J."/>
            <person name="Detter J.C."/>
            <person name="Han C."/>
            <person name="Hauser L."/>
            <person name="Jeffries C.D."/>
            <person name="Land M."/>
            <person name="Munk A.C."/>
            <person name="Tapia R."/>
            <person name="Dahl C."/>
        </authorList>
    </citation>
    <scope>NUCLEOTIDE SEQUENCE [LARGE SCALE GENOMIC DNA]</scope>
    <source>
        <strain>ATCC 17899 / DSM 180 / NBRC 103801 / NCIMB 10441 / D</strain>
    </source>
</reference>
<reference key="2">
    <citation type="journal article" date="1996" name="Eur. J. Biochem.">
        <title>A high-potential soluble cytochrome c-551 from the purple phototrophic bacterium Chromatium vinosum is homologous to cytochrome c8 from denitrifying pseudomonads.</title>
        <authorList>
            <person name="Samyn B."/>
            <person name="de Smet L."/>
            <person name="van Driessche G."/>
            <person name="Meyer T.E."/>
            <person name="Bartsch R.G."/>
            <person name="Cusanovich M.A."/>
            <person name="van Beeumen J.J."/>
        </authorList>
    </citation>
    <scope>PROTEIN SEQUENCE OF 15-94</scope>
</reference>
<sequence>MAFTAMTVAPSALADLVLAQKSGCTVCHSVEAAIVGPAYKDVAAKYRGDAAAQDRLVAKVMAGGVGNWGQVPMPPNAHVPAADIKALVTWILGL</sequence>
<dbReference type="EMBL" id="CP001896">
    <property type="protein sequence ID" value="ADC62626.1"/>
    <property type="molecule type" value="Genomic_DNA"/>
</dbReference>
<dbReference type="PIR" id="S68677">
    <property type="entry name" value="S68677"/>
</dbReference>
<dbReference type="SMR" id="P80549"/>
<dbReference type="STRING" id="572477.Alvin_1694"/>
<dbReference type="KEGG" id="alv:Alvin_1694"/>
<dbReference type="eggNOG" id="COG4654">
    <property type="taxonomic scope" value="Bacteria"/>
</dbReference>
<dbReference type="HOGENOM" id="CLU_133112_1_0_6"/>
<dbReference type="OrthoDB" id="9814063at2"/>
<dbReference type="Proteomes" id="UP000001441">
    <property type="component" value="Chromosome"/>
</dbReference>
<dbReference type="GO" id="GO:0009055">
    <property type="term" value="F:electron transfer activity"/>
    <property type="evidence" value="ECO:0007669"/>
    <property type="project" value="InterPro"/>
</dbReference>
<dbReference type="GO" id="GO:0020037">
    <property type="term" value="F:heme binding"/>
    <property type="evidence" value="ECO:0007669"/>
    <property type="project" value="InterPro"/>
</dbReference>
<dbReference type="GO" id="GO:0005506">
    <property type="term" value="F:iron ion binding"/>
    <property type="evidence" value="ECO:0007669"/>
    <property type="project" value="InterPro"/>
</dbReference>
<dbReference type="Gene3D" id="1.10.760.10">
    <property type="entry name" value="Cytochrome c-like domain"/>
    <property type="match status" value="1"/>
</dbReference>
<dbReference type="InterPro" id="IPR009056">
    <property type="entry name" value="Cyt_c-like_dom"/>
</dbReference>
<dbReference type="InterPro" id="IPR036909">
    <property type="entry name" value="Cyt_c-like_dom_sf"/>
</dbReference>
<dbReference type="InterPro" id="IPR002324">
    <property type="entry name" value="Cyt_c_ID"/>
</dbReference>
<dbReference type="Pfam" id="PF00034">
    <property type="entry name" value="Cytochrom_C"/>
    <property type="match status" value="1"/>
</dbReference>
<dbReference type="PRINTS" id="PR00606">
    <property type="entry name" value="CYTCHROMECID"/>
</dbReference>
<dbReference type="SUPFAM" id="SSF46626">
    <property type="entry name" value="Cytochrome c"/>
    <property type="match status" value="1"/>
</dbReference>
<dbReference type="PROSITE" id="PS51007">
    <property type="entry name" value="CYTC"/>
    <property type="match status" value="1"/>
</dbReference>
<comment type="function">
    <text>Efficiently couple electron transfer between the cytochrome bc1 complex and the photosynthetic reaction center.</text>
</comment>
<comment type="PTM">
    <text>Binds 1 heme c group covalently per subunit.</text>
</comment>
<keyword id="KW-0903">Direct protein sequencing</keyword>
<keyword id="KW-0249">Electron transport</keyword>
<keyword id="KW-0349">Heme</keyword>
<keyword id="KW-0408">Iron</keyword>
<keyword id="KW-0479">Metal-binding</keyword>
<keyword id="KW-1185">Reference proteome</keyword>
<keyword id="KW-0732">Signal</keyword>
<keyword id="KW-0813">Transport</keyword>
<protein>
    <recommendedName>
        <fullName>Cytochrome c-551</fullName>
    </recommendedName>
    <alternativeName>
        <fullName>Cytochrome c551</fullName>
    </alternativeName>
    <alternativeName>
        <fullName>Cytochrome c8</fullName>
    </alternativeName>
</protein>